<keyword id="KW-0413">Isomerase</keyword>
<dbReference type="EC" id="5.3.1.6" evidence="1"/>
<dbReference type="EMBL" id="CP000628">
    <property type="protein sequence ID" value="ACM26819.1"/>
    <property type="molecule type" value="Genomic_DNA"/>
</dbReference>
<dbReference type="RefSeq" id="WP_012651636.1">
    <property type="nucleotide sequence ID" value="NC_011985.1"/>
</dbReference>
<dbReference type="SMR" id="B9JFX9"/>
<dbReference type="STRING" id="311403.Arad_2687"/>
<dbReference type="GeneID" id="86848681"/>
<dbReference type="KEGG" id="ara:Arad_2687"/>
<dbReference type="eggNOG" id="COG0120">
    <property type="taxonomic scope" value="Bacteria"/>
</dbReference>
<dbReference type="HOGENOM" id="CLU_056590_1_0_5"/>
<dbReference type="UniPathway" id="UPA00115">
    <property type="reaction ID" value="UER00412"/>
</dbReference>
<dbReference type="Proteomes" id="UP000001600">
    <property type="component" value="Chromosome 1"/>
</dbReference>
<dbReference type="GO" id="GO:0004751">
    <property type="term" value="F:ribose-5-phosphate isomerase activity"/>
    <property type="evidence" value="ECO:0007669"/>
    <property type="project" value="UniProtKB-UniRule"/>
</dbReference>
<dbReference type="GO" id="GO:0009052">
    <property type="term" value="P:pentose-phosphate shunt, non-oxidative branch"/>
    <property type="evidence" value="ECO:0007669"/>
    <property type="project" value="UniProtKB-UniRule"/>
</dbReference>
<dbReference type="CDD" id="cd01398">
    <property type="entry name" value="RPI_A"/>
    <property type="match status" value="1"/>
</dbReference>
<dbReference type="FunFam" id="3.40.50.1360:FF:000001">
    <property type="entry name" value="Ribose-5-phosphate isomerase A"/>
    <property type="match status" value="1"/>
</dbReference>
<dbReference type="Gene3D" id="3.30.70.260">
    <property type="match status" value="1"/>
</dbReference>
<dbReference type="Gene3D" id="3.40.50.1360">
    <property type="match status" value="1"/>
</dbReference>
<dbReference type="HAMAP" id="MF_00170">
    <property type="entry name" value="Rib_5P_isom_A"/>
    <property type="match status" value="1"/>
</dbReference>
<dbReference type="InterPro" id="IPR037171">
    <property type="entry name" value="NagB/RpiA_transferase-like"/>
</dbReference>
<dbReference type="InterPro" id="IPR050262">
    <property type="entry name" value="Ribose-5P_isomerase"/>
</dbReference>
<dbReference type="InterPro" id="IPR020672">
    <property type="entry name" value="Ribose5P_isomerase_typA_subgr"/>
</dbReference>
<dbReference type="InterPro" id="IPR004788">
    <property type="entry name" value="Ribose5P_isomerase_type_A"/>
</dbReference>
<dbReference type="NCBIfam" id="NF001924">
    <property type="entry name" value="PRK00702.1"/>
    <property type="match status" value="1"/>
</dbReference>
<dbReference type="NCBIfam" id="TIGR00021">
    <property type="entry name" value="rpiA"/>
    <property type="match status" value="1"/>
</dbReference>
<dbReference type="PANTHER" id="PTHR43748">
    <property type="entry name" value="RIBOSE-5-PHOSPHATE ISOMERASE 3, CHLOROPLASTIC-RELATED"/>
    <property type="match status" value="1"/>
</dbReference>
<dbReference type="PANTHER" id="PTHR43748:SF3">
    <property type="entry name" value="RIBOSE-5-PHOSPHATE ISOMERASE 3, CHLOROPLASTIC-RELATED"/>
    <property type="match status" value="1"/>
</dbReference>
<dbReference type="Pfam" id="PF06026">
    <property type="entry name" value="Rib_5-P_isom_A"/>
    <property type="match status" value="1"/>
</dbReference>
<dbReference type="SUPFAM" id="SSF75445">
    <property type="entry name" value="D-ribose-5-phosphate isomerase (RpiA), lid domain"/>
    <property type="match status" value="1"/>
</dbReference>
<dbReference type="SUPFAM" id="SSF100950">
    <property type="entry name" value="NagB/RpiA/CoA transferase-like"/>
    <property type="match status" value="1"/>
</dbReference>
<proteinExistence type="inferred from homology"/>
<name>RPIA_RHIR8</name>
<feature type="chain" id="PRO_1000194688" description="Ribose-5-phosphate isomerase A">
    <location>
        <begin position="1"/>
        <end position="233"/>
    </location>
</feature>
<feature type="active site" description="Proton acceptor" evidence="1">
    <location>
        <position position="105"/>
    </location>
</feature>
<feature type="binding site" evidence="1">
    <location>
        <begin position="28"/>
        <end position="31"/>
    </location>
    <ligand>
        <name>substrate</name>
    </ligand>
</feature>
<feature type="binding site" evidence="1">
    <location>
        <begin position="83"/>
        <end position="86"/>
    </location>
    <ligand>
        <name>substrate</name>
    </ligand>
</feature>
<feature type="binding site" evidence="1">
    <location>
        <begin position="96"/>
        <end position="99"/>
    </location>
    <ligand>
        <name>substrate</name>
    </ligand>
</feature>
<feature type="binding site" evidence="1">
    <location>
        <position position="123"/>
    </location>
    <ligand>
        <name>substrate</name>
    </ligand>
</feature>
<comment type="function">
    <text evidence="1">Catalyzes the reversible conversion of ribose-5-phosphate to ribulose 5-phosphate.</text>
</comment>
<comment type="catalytic activity">
    <reaction evidence="1">
        <text>aldehydo-D-ribose 5-phosphate = D-ribulose 5-phosphate</text>
        <dbReference type="Rhea" id="RHEA:14657"/>
        <dbReference type="ChEBI" id="CHEBI:58121"/>
        <dbReference type="ChEBI" id="CHEBI:58273"/>
        <dbReference type="EC" id="5.3.1.6"/>
    </reaction>
</comment>
<comment type="pathway">
    <text evidence="1">Carbohydrate degradation; pentose phosphate pathway; D-ribose 5-phosphate from D-ribulose 5-phosphate (non-oxidative stage): step 1/1.</text>
</comment>
<comment type="subunit">
    <text evidence="1">Homodimer.</text>
</comment>
<comment type="similarity">
    <text evidence="1">Belongs to the ribose 5-phosphate isomerase family.</text>
</comment>
<reference key="1">
    <citation type="journal article" date="2009" name="J. Bacteriol.">
        <title>Genome sequences of three Agrobacterium biovars help elucidate the evolution of multichromosome genomes in bacteria.</title>
        <authorList>
            <person name="Slater S.C."/>
            <person name="Goldman B.S."/>
            <person name="Goodner B."/>
            <person name="Setubal J.C."/>
            <person name="Farrand S.K."/>
            <person name="Nester E.W."/>
            <person name="Burr T.J."/>
            <person name="Banta L."/>
            <person name="Dickerman A.W."/>
            <person name="Paulsen I."/>
            <person name="Otten L."/>
            <person name="Suen G."/>
            <person name="Welch R."/>
            <person name="Almeida N.F."/>
            <person name="Arnold F."/>
            <person name="Burton O.T."/>
            <person name="Du Z."/>
            <person name="Ewing A."/>
            <person name="Godsy E."/>
            <person name="Heisel S."/>
            <person name="Houmiel K.L."/>
            <person name="Jhaveri J."/>
            <person name="Lu J."/>
            <person name="Miller N.M."/>
            <person name="Norton S."/>
            <person name="Chen Q."/>
            <person name="Phoolcharoen W."/>
            <person name="Ohlin V."/>
            <person name="Ondrusek D."/>
            <person name="Pride N."/>
            <person name="Stricklin S.L."/>
            <person name="Sun J."/>
            <person name="Wheeler C."/>
            <person name="Wilson L."/>
            <person name="Zhu H."/>
            <person name="Wood D.W."/>
        </authorList>
    </citation>
    <scope>NUCLEOTIDE SEQUENCE [LARGE SCALE GENOMIC DNA]</scope>
    <source>
        <strain>K84 / ATCC BAA-868</strain>
    </source>
</reference>
<accession>B9JFX9</accession>
<organism>
    <name type="scientific">Rhizobium rhizogenes (strain K84 / ATCC BAA-868)</name>
    <name type="common">Agrobacterium radiobacter</name>
    <dbReference type="NCBI Taxonomy" id="311403"/>
    <lineage>
        <taxon>Bacteria</taxon>
        <taxon>Pseudomonadati</taxon>
        <taxon>Pseudomonadota</taxon>
        <taxon>Alphaproteobacteria</taxon>
        <taxon>Hyphomicrobiales</taxon>
        <taxon>Rhizobiaceae</taxon>
        <taxon>Rhizobium/Agrobacterium group</taxon>
        <taxon>Rhizobium</taxon>
    </lineage>
</organism>
<evidence type="ECO:0000255" key="1">
    <source>
        <dbReference type="HAMAP-Rule" id="MF_00170"/>
    </source>
</evidence>
<gene>
    <name evidence="1" type="primary">rpiA</name>
    <name type="ordered locus">Arad_2687</name>
</gene>
<protein>
    <recommendedName>
        <fullName evidence="1">Ribose-5-phosphate isomerase A</fullName>
        <ecNumber evidence="1">5.3.1.6</ecNumber>
    </recommendedName>
    <alternativeName>
        <fullName evidence="1">Phosphoriboisomerase A</fullName>
        <shortName evidence="1">PRI</shortName>
    </alternativeName>
</protein>
<sequence length="233" mass="24333">MDARQMKIEAARAALAYVESGMRLGVGTGSTAEEFVRLLAEKVAAGLVIEGVPTSERTARLCVDLGVPLKSLDELPELDLTIDGADEVDGALRLIKGGGGALLREKIVAASSQRMIVIADESKVVQTLGAFALPIEVNPFGLVSTRIQIEKTAARLGLSGALNLRQSEDGNFMTDGGHFIIDASFGRIPDAEALSIALNSIPGVVEHGLFINMATLAIIAGPSGARTLQANNT</sequence>